<accession>B0UV08</accession>
<name>ISPH_HISS2</name>
<dbReference type="EC" id="1.17.7.4" evidence="1"/>
<dbReference type="EMBL" id="CP000947">
    <property type="protein sequence ID" value="ACA32147.1"/>
    <property type="molecule type" value="Genomic_DNA"/>
</dbReference>
<dbReference type="RefSeq" id="WP_012341337.1">
    <property type="nucleotide sequence ID" value="NC_010519.1"/>
</dbReference>
<dbReference type="SMR" id="B0UV08"/>
<dbReference type="STRING" id="228400.HSM_0050"/>
<dbReference type="GeneID" id="31486325"/>
<dbReference type="KEGG" id="hsm:HSM_0050"/>
<dbReference type="HOGENOM" id="CLU_027486_1_1_6"/>
<dbReference type="UniPathway" id="UPA00056">
    <property type="reaction ID" value="UER00097"/>
</dbReference>
<dbReference type="UniPathway" id="UPA00059">
    <property type="reaction ID" value="UER00105"/>
</dbReference>
<dbReference type="GO" id="GO:0051539">
    <property type="term" value="F:4 iron, 4 sulfur cluster binding"/>
    <property type="evidence" value="ECO:0007669"/>
    <property type="project" value="UniProtKB-UniRule"/>
</dbReference>
<dbReference type="GO" id="GO:0051745">
    <property type="term" value="F:4-hydroxy-3-methylbut-2-enyl diphosphate reductase activity"/>
    <property type="evidence" value="ECO:0007669"/>
    <property type="project" value="UniProtKB-UniRule"/>
</dbReference>
<dbReference type="GO" id="GO:0046872">
    <property type="term" value="F:metal ion binding"/>
    <property type="evidence" value="ECO:0007669"/>
    <property type="project" value="UniProtKB-KW"/>
</dbReference>
<dbReference type="GO" id="GO:0050992">
    <property type="term" value="P:dimethylallyl diphosphate biosynthetic process"/>
    <property type="evidence" value="ECO:0007669"/>
    <property type="project" value="UniProtKB-UniRule"/>
</dbReference>
<dbReference type="GO" id="GO:0019288">
    <property type="term" value="P:isopentenyl diphosphate biosynthetic process, methylerythritol 4-phosphate pathway"/>
    <property type="evidence" value="ECO:0007669"/>
    <property type="project" value="UniProtKB-UniRule"/>
</dbReference>
<dbReference type="GO" id="GO:0016114">
    <property type="term" value="P:terpenoid biosynthetic process"/>
    <property type="evidence" value="ECO:0007669"/>
    <property type="project" value="UniProtKB-UniRule"/>
</dbReference>
<dbReference type="CDD" id="cd13944">
    <property type="entry name" value="lytB_ispH"/>
    <property type="match status" value="1"/>
</dbReference>
<dbReference type="Gene3D" id="3.40.50.11270">
    <property type="match status" value="1"/>
</dbReference>
<dbReference type="Gene3D" id="3.40.1010.20">
    <property type="entry name" value="4-hydroxy-3-methylbut-2-enyl diphosphate reductase, catalytic domain"/>
    <property type="match status" value="2"/>
</dbReference>
<dbReference type="HAMAP" id="MF_00191">
    <property type="entry name" value="IspH"/>
    <property type="match status" value="1"/>
</dbReference>
<dbReference type="InterPro" id="IPR003451">
    <property type="entry name" value="LytB/IspH"/>
</dbReference>
<dbReference type="NCBIfam" id="TIGR00216">
    <property type="entry name" value="ispH_lytB"/>
    <property type="match status" value="1"/>
</dbReference>
<dbReference type="NCBIfam" id="NF002188">
    <property type="entry name" value="PRK01045.1-2"/>
    <property type="match status" value="1"/>
</dbReference>
<dbReference type="NCBIfam" id="NF002190">
    <property type="entry name" value="PRK01045.1-4"/>
    <property type="match status" value="1"/>
</dbReference>
<dbReference type="PANTHER" id="PTHR30426">
    <property type="entry name" value="4-HYDROXY-3-METHYLBUT-2-ENYL DIPHOSPHATE REDUCTASE"/>
    <property type="match status" value="1"/>
</dbReference>
<dbReference type="PANTHER" id="PTHR30426:SF0">
    <property type="entry name" value="4-HYDROXY-3-METHYLBUT-2-ENYL DIPHOSPHATE REDUCTASE"/>
    <property type="match status" value="1"/>
</dbReference>
<dbReference type="Pfam" id="PF02401">
    <property type="entry name" value="LYTB"/>
    <property type="match status" value="1"/>
</dbReference>
<protein>
    <recommendedName>
        <fullName evidence="1">4-hydroxy-3-methylbut-2-enyl diphosphate reductase</fullName>
        <shortName evidence="1">HMBPP reductase</shortName>
        <ecNumber evidence="1">1.17.7.4</ecNumber>
    </recommendedName>
</protein>
<sequence>MKIILANPRGFCAGVDRAISIVELALEIHGAPIYVRHEVVHNRFVVNGLRERGAIFVEELDEVPNGAIVIFSAHGVSQAVRQEAKERNLKVFDATCPLVTKVHMQVARASRKGTKAILIGHEGHPEVIGTMGQYDNDKGGIYLVEDVEDIAKLTLRNDEDITFMTQTTLSIDDTAGVIEVLKQKYPAIQGPRKNDICYATTNRQQAVRELAKLSDLVIVVGSKNSSNSNRLAELASRMGVTAKLIDDANDIEVSWLDNVTVIGLTAGASAPEILVQSVISRLKELGVDKVEELEGCEENTVFEVPKELRIKEVE</sequence>
<feature type="chain" id="PRO_1000077518" description="4-hydroxy-3-methylbut-2-enyl diphosphate reductase">
    <location>
        <begin position="1"/>
        <end position="314"/>
    </location>
</feature>
<feature type="active site" description="Proton donor" evidence="1">
    <location>
        <position position="126"/>
    </location>
</feature>
<feature type="binding site" evidence="1">
    <location>
        <position position="12"/>
    </location>
    <ligand>
        <name>[4Fe-4S] cluster</name>
        <dbReference type="ChEBI" id="CHEBI:49883"/>
    </ligand>
</feature>
<feature type="binding site" evidence="1">
    <location>
        <position position="41"/>
    </location>
    <ligand>
        <name>(2E)-4-hydroxy-3-methylbut-2-enyl diphosphate</name>
        <dbReference type="ChEBI" id="CHEBI:128753"/>
    </ligand>
</feature>
<feature type="binding site" evidence="1">
    <location>
        <position position="41"/>
    </location>
    <ligand>
        <name>dimethylallyl diphosphate</name>
        <dbReference type="ChEBI" id="CHEBI:57623"/>
    </ligand>
</feature>
<feature type="binding site" evidence="1">
    <location>
        <position position="41"/>
    </location>
    <ligand>
        <name>isopentenyl diphosphate</name>
        <dbReference type="ChEBI" id="CHEBI:128769"/>
    </ligand>
</feature>
<feature type="binding site" evidence="1">
    <location>
        <position position="74"/>
    </location>
    <ligand>
        <name>(2E)-4-hydroxy-3-methylbut-2-enyl diphosphate</name>
        <dbReference type="ChEBI" id="CHEBI:128753"/>
    </ligand>
</feature>
<feature type="binding site" evidence="1">
    <location>
        <position position="74"/>
    </location>
    <ligand>
        <name>dimethylallyl diphosphate</name>
        <dbReference type="ChEBI" id="CHEBI:57623"/>
    </ligand>
</feature>
<feature type="binding site" evidence="1">
    <location>
        <position position="74"/>
    </location>
    <ligand>
        <name>isopentenyl diphosphate</name>
        <dbReference type="ChEBI" id="CHEBI:128769"/>
    </ligand>
</feature>
<feature type="binding site" evidence="1">
    <location>
        <position position="96"/>
    </location>
    <ligand>
        <name>[4Fe-4S] cluster</name>
        <dbReference type="ChEBI" id="CHEBI:49883"/>
    </ligand>
</feature>
<feature type="binding site" evidence="1">
    <location>
        <position position="124"/>
    </location>
    <ligand>
        <name>(2E)-4-hydroxy-3-methylbut-2-enyl diphosphate</name>
        <dbReference type="ChEBI" id="CHEBI:128753"/>
    </ligand>
</feature>
<feature type="binding site" evidence="1">
    <location>
        <position position="124"/>
    </location>
    <ligand>
        <name>dimethylallyl diphosphate</name>
        <dbReference type="ChEBI" id="CHEBI:57623"/>
    </ligand>
</feature>
<feature type="binding site" evidence="1">
    <location>
        <position position="124"/>
    </location>
    <ligand>
        <name>isopentenyl diphosphate</name>
        <dbReference type="ChEBI" id="CHEBI:128769"/>
    </ligand>
</feature>
<feature type="binding site" evidence="1">
    <location>
        <position position="167"/>
    </location>
    <ligand>
        <name>(2E)-4-hydroxy-3-methylbut-2-enyl diphosphate</name>
        <dbReference type="ChEBI" id="CHEBI:128753"/>
    </ligand>
</feature>
<feature type="binding site" evidence="1">
    <location>
        <position position="197"/>
    </location>
    <ligand>
        <name>[4Fe-4S] cluster</name>
        <dbReference type="ChEBI" id="CHEBI:49883"/>
    </ligand>
</feature>
<feature type="binding site" evidence="1">
    <location>
        <position position="225"/>
    </location>
    <ligand>
        <name>(2E)-4-hydroxy-3-methylbut-2-enyl diphosphate</name>
        <dbReference type="ChEBI" id="CHEBI:128753"/>
    </ligand>
</feature>
<feature type="binding site" evidence="1">
    <location>
        <position position="225"/>
    </location>
    <ligand>
        <name>dimethylallyl diphosphate</name>
        <dbReference type="ChEBI" id="CHEBI:57623"/>
    </ligand>
</feature>
<feature type="binding site" evidence="1">
    <location>
        <position position="225"/>
    </location>
    <ligand>
        <name>isopentenyl diphosphate</name>
        <dbReference type="ChEBI" id="CHEBI:128769"/>
    </ligand>
</feature>
<feature type="binding site" evidence="1">
    <location>
        <position position="226"/>
    </location>
    <ligand>
        <name>(2E)-4-hydroxy-3-methylbut-2-enyl diphosphate</name>
        <dbReference type="ChEBI" id="CHEBI:128753"/>
    </ligand>
</feature>
<feature type="binding site" evidence="1">
    <location>
        <position position="226"/>
    </location>
    <ligand>
        <name>dimethylallyl diphosphate</name>
        <dbReference type="ChEBI" id="CHEBI:57623"/>
    </ligand>
</feature>
<feature type="binding site" evidence="1">
    <location>
        <position position="226"/>
    </location>
    <ligand>
        <name>isopentenyl diphosphate</name>
        <dbReference type="ChEBI" id="CHEBI:128769"/>
    </ligand>
</feature>
<feature type="binding site" evidence="1">
    <location>
        <position position="227"/>
    </location>
    <ligand>
        <name>(2E)-4-hydroxy-3-methylbut-2-enyl diphosphate</name>
        <dbReference type="ChEBI" id="CHEBI:128753"/>
    </ligand>
</feature>
<feature type="binding site" evidence="1">
    <location>
        <position position="227"/>
    </location>
    <ligand>
        <name>dimethylallyl diphosphate</name>
        <dbReference type="ChEBI" id="CHEBI:57623"/>
    </ligand>
</feature>
<feature type="binding site" evidence="1">
    <location>
        <position position="227"/>
    </location>
    <ligand>
        <name>isopentenyl diphosphate</name>
        <dbReference type="ChEBI" id="CHEBI:128769"/>
    </ligand>
</feature>
<feature type="binding site" evidence="1">
    <location>
        <position position="269"/>
    </location>
    <ligand>
        <name>(2E)-4-hydroxy-3-methylbut-2-enyl diphosphate</name>
        <dbReference type="ChEBI" id="CHEBI:128753"/>
    </ligand>
</feature>
<feature type="binding site" evidence="1">
    <location>
        <position position="269"/>
    </location>
    <ligand>
        <name>dimethylallyl diphosphate</name>
        <dbReference type="ChEBI" id="CHEBI:57623"/>
    </ligand>
</feature>
<feature type="binding site" evidence="1">
    <location>
        <position position="269"/>
    </location>
    <ligand>
        <name>isopentenyl diphosphate</name>
        <dbReference type="ChEBI" id="CHEBI:128769"/>
    </ligand>
</feature>
<keyword id="KW-0004">4Fe-4S</keyword>
<keyword id="KW-0408">Iron</keyword>
<keyword id="KW-0411">Iron-sulfur</keyword>
<keyword id="KW-0414">Isoprene biosynthesis</keyword>
<keyword id="KW-0479">Metal-binding</keyword>
<keyword id="KW-0560">Oxidoreductase</keyword>
<proteinExistence type="inferred from homology"/>
<comment type="function">
    <text evidence="1">Catalyzes the conversion of 1-hydroxy-2-methyl-2-(E)-butenyl 4-diphosphate (HMBPP) into a mixture of isopentenyl diphosphate (IPP) and dimethylallyl diphosphate (DMAPP). Acts in the terminal step of the DOXP/MEP pathway for isoprenoid precursor biosynthesis.</text>
</comment>
<comment type="catalytic activity">
    <reaction evidence="1">
        <text>isopentenyl diphosphate + 2 oxidized [2Fe-2S]-[ferredoxin] + H2O = (2E)-4-hydroxy-3-methylbut-2-enyl diphosphate + 2 reduced [2Fe-2S]-[ferredoxin] + 2 H(+)</text>
        <dbReference type="Rhea" id="RHEA:24488"/>
        <dbReference type="Rhea" id="RHEA-COMP:10000"/>
        <dbReference type="Rhea" id="RHEA-COMP:10001"/>
        <dbReference type="ChEBI" id="CHEBI:15377"/>
        <dbReference type="ChEBI" id="CHEBI:15378"/>
        <dbReference type="ChEBI" id="CHEBI:33737"/>
        <dbReference type="ChEBI" id="CHEBI:33738"/>
        <dbReference type="ChEBI" id="CHEBI:128753"/>
        <dbReference type="ChEBI" id="CHEBI:128769"/>
        <dbReference type="EC" id="1.17.7.4"/>
    </reaction>
</comment>
<comment type="catalytic activity">
    <reaction evidence="1">
        <text>dimethylallyl diphosphate + 2 oxidized [2Fe-2S]-[ferredoxin] + H2O = (2E)-4-hydroxy-3-methylbut-2-enyl diphosphate + 2 reduced [2Fe-2S]-[ferredoxin] + 2 H(+)</text>
        <dbReference type="Rhea" id="RHEA:24825"/>
        <dbReference type="Rhea" id="RHEA-COMP:10000"/>
        <dbReference type="Rhea" id="RHEA-COMP:10001"/>
        <dbReference type="ChEBI" id="CHEBI:15377"/>
        <dbReference type="ChEBI" id="CHEBI:15378"/>
        <dbReference type="ChEBI" id="CHEBI:33737"/>
        <dbReference type="ChEBI" id="CHEBI:33738"/>
        <dbReference type="ChEBI" id="CHEBI:57623"/>
        <dbReference type="ChEBI" id="CHEBI:128753"/>
        <dbReference type="EC" id="1.17.7.4"/>
    </reaction>
</comment>
<comment type="cofactor">
    <cofactor evidence="1">
        <name>[4Fe-4S] cluster</name>
        <dbReference type="ChEBI" id="CHEBI:49883"/>
    </cofactor>
    <text evidence="1">Binds 1 [4Fe-4S] cluster per subunit.</text>
</comment>
<comment type="pathway">
    <text evidence="1">Isoprenoid biosynthesis; dimethylallyl diphosphate biosynthesis; dimethylallyl diphosphate from (2E)-4-hydroxy-3-methylbutenyl diphosphate: step 1/1.</text>
</comment>
<comment type="pathway">
    <text evidence="1">Isoprenoid biosynthesis; isopentenyl diphosphate biosynthesis via DXP pathway; isopentenyl diphosphate from 1-deoxy-D-xylulose 5-phosphate: step 6/6.</text>
</comment>
<comment type="similarity">
    <text evidence="1">Belongs to the IspH family.</text>
</comment>
<evidence type="ECO:0000255" key="1">
    <source>
        <dbReference type="HAMAP-Rule" id="MF_00191"/>
    </source>
</evidence>
<organism>
    <name type="scientific">Histophilus somni (strain 2336)</name>
    <name type="common">Haemophilus somnus</name>
    <dbReference type="NCBI Taxonomy" id="228400"/>
    <lineage>
        <taxon>Bacteria</taxon>
        <taxon>Pseudomonadati</taxon>
        <taxon>Pseudomonadota</taxon>
        <taxon>Gammaproteobacteria</taxon>
        <taxon>Pasteurellales</taxon>
        <taxon>Pasteurellaceae</taxon>
        <taxon>Histophilus</taxon>
    </lineage>
</organism>
<reference key="1">
    <citation type="submission" date="2008-02" db="EMBL/GenBank/DDBJ databases">
        <title>Complete sequence of Haemophilus somnus 2336.</title>
        <authorList>
            <consortium name="US DOE Joint Genome Institute"/>
            <person name="Siddaramappa S."/>
            <person name="Duncan A.J."/>
            <person name="Challacombe J.F."/>
            <person name="Rainey D."/>
            <person name="Gillaspy A.F."/>
            <person name="Carson M."/>
            <person name="Gipson J."/>
            <person name="Gipson M."/>
            <person name="Bruce D."/>
            <person name="Detter J.C."/>
            <person name="Han C.S."/>
            <person name="Land M."/>
            <person name="Tapia R."/>
            <person name="Thompson L.S."/>
            <person name="Orvis J."/>
            <person name="Zaitshik J."/>
            <person name="Barnes G."/>
            <person name="Brettin T.S."/>
            <person name="Dyer D.W."/>
            <person name="Inzana T.J."/>
        </authorList>
    </citation>
    <scope>NUCLEOTIDE SEQUENCE [LARGE SCALE GENOMIC DNA]</scope>
    <source>
        <strain>2336</strain>
    </source>
</reference>
<gene>
    <name evidence="1" type="primary">ispH</name>
    <name type="ordered locus">HSM_0050</name>
</gene>